<accession>Q7W3V2</accession>
<organism>
    <name type="scientific">Bordetella parapertussis (strain 12822 / ATCC BAA-587 / NCTC 13253)</name>
    <dbReference type="NCBI Taxonomy" id="257311"/>
    <lineage>
        <taxon>Bacteria</taxon>
        <taxon>Pseudomonadati</taxon>
        <taxon>Pseudomonadota</taxon>
        <taxon>Betaproteobacteria</taxon>
        <taxon>Burkholderiales</taxon>
        <taxon>Alcaligenaceae</taxon>
        <taxon>Bordetella</taxon>
    </lineage>
</organism>
<gene>
    <name evidence="1" type="primary">mtgA</name>
    <name type="ordered locus">BPP3925</name>
</gene>
<sequence>MPKPTARRLNWFRVITAVIMAVLCIAILYQLWMFSLVVWYAYRDPGSSAIMRQELARLRERDPEAELKYQWVPYDRISNTLKQAVVASEDANFTEHDGVEWDAIRKAWEYNQRQAERGRTKMRGGSTITQQLAKNLFLSGSRSYLRKGQELVLAYMIEHVMPKERILELYLNVAEWGVGVFGAEAAARHYYNTSAARLGAGQAARLAAMLPNPRYYDRHRNTGYLNSRTATLTRRMRMVEIP</sequence>
<reference key="1">
    <citation type="journal article" date="2003" name="Nat. Genet.">
        <title>Comparative analysis of the genome sequences of Bordetella pertussis, Bordetella parapertussis and Bordetella bronchiseptica.</title>
        <authorList>
            <person name="Parkhill J."/>
            <person name="Sebaihia M."/>
            <person name="Preston A."/>
            <person name="Murphy L.D."/>
            <person name="Thomson N.R."/>
            <person name="Harris D.E."/>
            <person name="Holden M.T.G."/>
            <person name="Churcher C.M."/>
            <person name="Bentley S.D."/>
            <person name="Mungall K.L."/>
            <person name="Cerdeno-Tarraga A.-M."/>
            <person name="Temple L."/>
            <person name="James K.D."/>
            <person name="Harris B."/>
            <person name="Quail M.A."/>
            <person name="Achtman M."/>
            <person name="Atkin R."/>
            <person name="Baker S."/>
            <person name="Basham D."/>
            <person name="Bason N."/>
            <person name="Cherevach I."/>
            <person name="Chillingworth T."/>
            <person name="Collins M."/>
            <person name="Cronin A."/>
            <person name="Davis P."/>
            <person name="Doggett J."/>
            <person name="Feltwell T."/>
            <person name="Goble A."/>
            <person name="Hamlin N."/>
            <person name="Hauser H."/>
            <person name="Holroyd S."/>
            <person name="Jagels K."/>
            <person name="Leather S."/>
            <person name="Moule S."/>
            <person name="Norberczak H."/>
            <person name="O'Neil S."/>
            <person name="Ormond D."/>
            <person name="Price C."/>
            <person name="Rabbinowitsch E."/>
            <person name="Rutter S."/>
            <person name="Sanders M."/>
            <person name="Saunders D."/>
            <person name="Seeger K."/>
            <person name="Sharp S."/>
            <person name="Simmonds M."/>
            <person name="Skelton J."/>
            <person name="Squares R."/>
            <person name="Squares S."/>
            <person name="Stevens K."/>
            <person name="Unwin L."/>
            <person name="Whitehead S."/>
            <person name="Barrell B.G."/>
            <person name="Maskell D.J."/>
        </authorList>
    </citation>
    <scope>NUCLEOTIDE SEQUENCE [LARGE SCALE GENOMIC DNA]</scope>
    <source>
        <strain>12822 / ATCC BAA-587 / NCTC 13253</strain>
    </source>
</reference>
<protein>
    <recommendedName>
        <fullName evidence="1">Biosynthetic peptidoglycan transglycosylase</fullName>
        <ecNumber evidence="1">2.4.99.28</ecNumber>
    </recommendedName>
    <alternativeName>
        <fullName evidence="1">Glycan polymerase</fullName>
    </alternativeName>
    <alternativeName>
        <fullName evidence="1">Peptidoglycan glycosyltransferase MtgA</fullName>
        <shortName evidence="1">PGT</shortName>
    </alternativeName>
</protein>
<keyword id="KW-0997">Cell inner membrane</keyword>
<keyword id="KW-1003">Cell membrane</keyword>
<keyword id="KW-0133">Cell shape</keyword>
<keyword id="KW-0961">Cell wall biogenesis/degradation</keyword>
<keyword id="KW-0328">Glycosyltransferase</keyword>
<keyword id="KW-0472">Membrane</keyword>
<keyword id="KW-0573">Peptidoglycan synthesis</keyword>
<keyword id="KW-0808">Transferase</keyword>
<keyword id="KW-0812">Transmembrane</keyword>
<keyword id="KW-1133">Transmembrane helix</keyword>
<name>MTGA_BORPA</name>
<evidence type="ECO:0000255" key="1">
    <source>
        <dbReference type="HAMAP-Rule" id="MF_00766"/>
    </source>
</evidence>
<feature type="chain" id="PRO_0000083118" description="Biosynthetic peptidoglycan transglycosylase">
    <location>
        <begin position="1"/>
        <end position="242"/>
    </location>
</feature>
<feature type="transmembrane region" description="Helical" evidence="1">
    <location>
        <begin position="18"/>
        <end position="38"/>
    </location>
</feature>
<proteinExistence type="inferred from homology"/>
<dbReference type="EC" id="2.4.99.28" evidence="1"/>
<dbReference type="EMBL" id="BX640435">
    <property type="protein sequence ID" value="CAE39208.1"/>
    <property type="molecule type" value="Genomic_DNA"/>
</dbReference>
<dbReference type="RefSeq" id="WP_003814960.1">
    <property type="nucleotide sequence ID" value="NC_002928.3"/>
</dbReference>
<dbReference type="SMR" id="Q7W3V2"/>
<dbReference type="CAZy" id="GT51">
    <property type="family name" value="Glycosyltransferase Family 51"/>
</dbReference>
<dbReference type="GeneID" id="93205724"/>
<dbReference type="KEGG" id="bpa:BPP3925"/>
<dbReference type="HOGENOM" id="CLU_006354_1_0_4"/>
<dbReference type="UniPathway" id="UPA00219"/>
<dbReference type="Proteomes" id="UP000001421">
    <property type="component" value="Chromosome"/>
</dbReference>
<dbReference type="GO" id="GO:0009274">
    <property type="term" value="C:peptidoglycan-based cell wall"/>
    <property type="evidence" value="ECO:0007669"/>
    <property type="project" value="InterPro"/>
</dbReference>
<dbReference type="GO" id="GO:0005886">
    <property type="term" value="C:plasma membrane"/>
    <property type="evidence" value="ECO:0007669"/>
    <property type="project" value="UniProtKB-SubCell"/>
</dbReference>
<dbReference type="GO" id="GO:0016763">
    <property type="term" value="F:pentosyltransferase activity"/>
    <property type="evidence" value="ECO:0007669"/>
    <property type="project" value="InterPro"/>
</dbReference>
<dbReference type="GO" id="GO:0008955">
    <property type="term" value="F:peptidoglycan glycosyltransferase activity"/>
    <property type="evidence" value="ECO:0007669"/>
    <property type="project" value="UniProtKB-UniRule"/>
</dbReference>
<dbReference type="GO" id="GO:0071555">
    <property type="term" value="P:cell wall organization"/>
    <property type="evidence" value="ECO:0007669"/>
    <property type="project" value="UniProtKB-KW"/>
</dbReference>
<dbReference type="GO" id="GO:0009252">
    <property type="term" value="P:peptidoglycan biosynthetic process"/>
    <property type="evidence" value="ECO:0007669"/>
    <property type="project" value="UniProtKB-UniRule"/>
</dbReference>
<dbReference type="GO" id="GO:0008360">
    <property type="term" value="P:regulation of cell shape"/>
    <property type="evidence" value="ECO:0007669"/>
    <property type="project" value="UniProtKB-KW"/>
</dbReference>
<dbReference type="Gene3D" id="1.10.3810.10">
    <property type="entry name" value="Biosynthetic peptidoglycan transglycosylase-like"/>
    <property type="match status" value="1"/>
</dbReference>
<dbReference type="HAMAP" id="MF_00766">
    <property type="entry name" value="PGT_MtgA"/>
    <property type="match status" value="1"/>
</dbReference>
<dbReference type="InterPro" id="IPR001264">
    <property type="entry name" value="Glyco_trans_51"/>
</dbReference>
<dbReference type="InterPro" id="IPR023346">
    <property type="entry name" value="Lysozyme-like_dom_sf"/>
</dbReference>
<dbReference type="InterPro" id="IPR036950">
    <property type="entry name" value="PBP_transglycosylase"/>
</dbReference>
<dbReference type="InterPro" id="IPR011812">
    <property type="entry name" value="Pep_trsgly"/>
</dbReference>
<dbReference type="NCBIfam" id="TIGR02070">
    <property type="entry name" value="mono_pep_trsgly"/>
    <property type="match status" value="1"/>
</dbReference>
<dbReference type="PANTHER" id="PTHR30400:SF0">
    <property type="entry name" value="BIOSYNTHETIC PEPTIDOGLYCAN TRANSGLYCOSYLASE"/>
    <property type="match status" value="1"/>
</dbReference>
<dbReference type="PANTHER" id="PTHR30400">
    <property type="entry name" value="MONOFUNCTIONAL BIOSYNTHETIC PEPTIDOGLYCAN TRANSGLYCOSYLASE"/>
    <property type="match status" value="1"/>
</dbReference>
<dbReference type="Pfam" id="PF00912">
    <property type="entry name" value="Transgly"/>
    <property type="match status" value="1"/>
</dbReference>
<dbReference type="SUPFAM" id="SSF53955">
    <property type="entry name" value="Lysozyme-like"/>
    <property type="match status" value="1"/>
</dbReference>
<comment type="function">
    <text evidence="1">Peptidoglycan polymerase that catalyzes glycan chain elongation from lipid-linked precursors.</text>
</comment>
<comment type="catalytic activity">
    <reaction evidence="1">
        <text>[GlcNAc-(1-&gt;4)-Mur2Ac(oyl-L-Ala-gamma-D-Glu-L-Lys-D-Ala-D-Ala)](n)-di-trans,octa-cis-undecaprenyl diphosphate + beta-D-GlcNAc-(1-&gt;4)-Mur2Ac(oyl-L-Ala-gamma-D-Glu-L-Lys-D-Ala-D-Ala)-di-trans,octa-cis-undecaprenyl diphosphate = [GlcNAc-(1-&gt;4)-Mur2Ac(oyl-L-Ala-gamma-D-Glu-L-Lys-D-Ala-D-Ala)](n+1)-di-trans,octa-cis-undecaprenyl diphosphate + di-trans,octa-cis-undecaprenyl diphosphate + H(+)</text>
        <dbReference type="Rhea" id="RHEA:23708"/>
        <dbReference type="Rhea" id="RHEA-COMP:9602"/>
        <dbReference type="Rhea" id="RHEA-COMP:9603"/>
        <dbReference type="ChEBI" id="CHEBI:15378"/>
        <dbReference type="ChEBI" id="CHEBI:58405"/>
        <dbReference type="ChEBI" id="CHEBI:60033"/>
        <dbReference type="ChEBI" id="CHEBI:78435"/>
        <dbReference type="EC" id="2.4.99.28"/>
    </reaction>
</comment>
<comment type="pathway">
    <text evidence="1">Cell wall biogenesis; peptidoglycan biosynthesis.</text>
</comment>
<comment type="subcellular location">
    <subcellularLocation>
        <location evidence="1">Cell inner membrane</location>
        <topology evidence="1">Single-pass membrane protein</topology>
    </subcellularLocation>
</comment>
<comment type="similarity">
    <text evidence="1">Belongs to the glycosyltransferase 51 family.</text>
</comment>